<proteinExistence type="inferred from homology"/>
<protein>
    <recommendedName>
        <fullName evidence="1">Phosphomethylpyrimidine synthase</fullName>
        <ecNumber evidence="1">4.1.99.17</ecNumber>
    </recommendedName>
    <alternativeName>
        <fullName evidence="1">Hydroxymethylpyrimidine phosphate synthase</fullName>
        <shortName evidence="1">HMP-P synthase</shortName>
        <shortName evidence="1">HMP-phosphate synthase</shortName>
        <shortName evidence="1">HMPP synthase</shortName>
    </alternativeName>
    <alternativeName>
        <fullName evidence="1">Thiamine biosynthesis protein ThiC</fullName>
    </alternativeName>
</protein>
<sequence length="632" mass="71052">MKIPVSRLEKFTSDNARVDTAAIQSLPNSRKIYIQGSRADIRVPMREISQSDTNTSQGIEKNPPICVYDTSGPYSDPDTNIDIRHGLLPLREKWIEEREDTEVLSGLSSSYSLKRLQDPALTAMRFNLTRPVRRAKGGSNVTQMHYARRGIITPEMEFIAIRENQRRERVTDLAKSELLTRQHPGQSFGAAIQEWITPEFVRDEVARGRAIIPANINHPEAEPMIIGRNFLVKINANIGNSALGSSIQDEVEKMTWAIRWGGDTVMDLSTGKNIHETREWIIRNSPVPIGTVPIYQALEKVDGKAEELTWEIFRDTLIEQAEQGVDYFTIHAGVRLPFVPMTAKRMTGIVSRGGSIMAKWCLAHHKESFLYTHFEDICEIMKAYDVSFSLGDGLRPGSIYDANDEAQFAELKTLGELTKIAWKHDIQTMIEGPGHVPMHLIRENMDLQLEHCHEAPFYTLGPLTTDIAPGYDHITSAIGAAMIGWYGTAMLCYVTPKEHLGLPDKDDVKDGIITYKIAAHAADLAKGHPGAQIRDNALSKARFEFRWNDQFNLSLDPDKARQFHDETLPQEGAKLAHFCSMCGPNFCSMKITQDVRDYAAQQGISENEALQEGMAKKADEFIEKGGEIYRKL</sequence>
<evidence type="ECO:0000255" key="1">
    <source>
        <dbReference type="HAMAP-Rule" id="MF_00089"/>
    </source>
</evidence>
<dbReference type="EC" id="4.1.99.17" evidence="1"/>
<dbReference type="EMBL" id="CP000450">
    <property type="protein sequence ID" value="ABI58482.1"/>
    <property type="molecule type" value="Genomic_DNA"/>
</dbReference>
<dbReference type="RefSeq" id="WP_011633327.1">
    <property type="nucleotide sequence ID" value="NC_008344.1"/>
</dbReference>
<dbReference type="SMR" id="Q0AJI9"/>
<dbReference type="STRING" id="335283.Neut_0196"/>
<dbReference type="KEGG" id="net:Neut_0196"/>
<dbReference type="eggNOG" id="COG0422">
    <property type="taxonomic scope" value="Bacteria"/>
</dbReference>
<dbReference type="HOGENOM" id="CLU_013181_2_1_4"/>
<dbReference type="OrthoDB" id="9805897at2"/>
<dbReference type="UniPathway" id="UPA00060"/>
<dbReference type="Proteomes" id="UP000001966">
    <property type="component" value="Chromosome"/>
</dbReference>
<dbReference type="GO" id="GO:0005829">
    <property type="term" value="C:cytosol"/>
    <property type="evidence" value="ECO:0007669"/>
    <property type="project" value="TreeGrafter"/>
</dbReference>
<dbReference type="GO" id="GO:0051539">
    <property type="term" value="F:4 iron, 4 sulfur cluster binding"/>
    <property type="evidence" value="ECO:0007669"/>
    <property type="project" value="UniProtKB-KW"/>
</dbReference>
<dbReference type="GO" id="GO:0016830">
    <property type="term" value="F:carbon-carbon lyase activity"/>
    <property type="evidence" value="ECO:0007669"/>
    <property type="project" value="InterPro"/>
</dbReference>
<dbReference type="GO" id="GO:0008270">
    <property type="term" value="F:zinc ion binding"/>
    <property type="evidence" value="ECO:0007669"/>
    <property type="project" value="UniProtKB-UniRule"/>
</dbReference>
<dbReference type="GO" id="GO:0009228">
    <property type="term" value="P:thiamine biosynthetic process"/>
    <property type="evidence" value="ECO:0007669"/>
    <property type="project" value="UniProtKB-KW"/>
</dbReference>
<dbReference type="GO" id="GO:0009229">
    <property type="term" value="P:thiamine diphosphate biosynthetic process"/>
    <property type="evidence" value="ECO:0007669"/>
    <property type="project" value="UniProtKB-UniRule"/>
</dbReference>
<dbReference type="FunFam" id="3.20.20.540:FF:000001">
    <property type="entry name" value="Phosphomethylpyrimidine synthase"/>
    <property type="match status" value="1"/>
</dbReference>
<dbReference type="Gene3D" id="6.10.250.620">
    <property type="match status" value="1"/>
</dbReference>
<dbReference type="Gene3D" id="3.20.20.540">
    <property type="entry name" value="Radical SAM ThiC family, central domain"/>
    <property type="match status" value="1"/>
</dbReference>
<dbReference type="HAMAP" id="MF_00089">
    <property type="entry name" value="ThiC"/>
    <property type="match status" value="1"/>
</dbReference>
<dbReference type="InterPro" id="IPR037509">
    <property type="entry name" value="ThiC"/>
</dbReference>
<dbReference type="InterPro" id="IPR025747">
    <property type="entry name" value="ThiC-associated_dom"/>
</dbReference>
<dbReference type="InterPro" id="IPR038521">
    <property type="entry name" value="ThiC/Bza_core_dom"/>
</dbReference>
<dbReference type="InterPro" id="IPR002817">
    <property type="entry name" value="ThiC/BzaA/B"/>
</dbReference>
<dbReference type="NCBIfam" id="NF006763">
    <property type="entry name" value="PRK09284.1"/>
    <property type="match status" value="1"/>
</dbReference>
<dbReference type="NCBIfam" id="NF009895">
    <property type="entry name" value="PRK13352.1"/>
    <property type="match status" value="1"/>
</dbReference>
<dbReference type="NCBIfam" id="TIGR00190">
    <property type="entry name" value="thiC"/>
    <property type="match status" value="1"/>
</dbReference>
<dbReference type="PANTHER" id="PTHR30557:SF1">
    <property type="entry name" value="PHOSPHOMETHYLPYRIMIDINE SYNTHASE, CHLOROPLASTIC"/>
    <property type="match status" value="1"/>
</dbReference>
<dbReference type="PANTHER" id="PTHR30557">
    <property type="entry name" value="THIAMINE BIOSYNTHESIS PROTEIN THIC"/>
    <property type="match status" value="1"/>
</dbReference>
<dbReference type="Pfam" id="PF13667">
    <property type="entry name" value="ThiC-associated"/>
    <property type="match status" value="1"/>
</dbReference>
<dbReference type="Pfam" id="PF01964">
    <property type="entry name" value="ThiC_Rad_SAM"/>
    <property type="match status" value="1"/>
</dbReference>
<dbReference type="SFLD" id="SFLDF00407">
    <property type="entry name" value="phosphomethylpyrimidine_syntha"/>
    <property type="match status" value="1"/>
</dbReference>
<dbReference type="SFLD" id="SFLDG01114">
    <property type="entry name" value="phosphomethylpyrimidine_syntha"/>
    <property type="match status" value="1"/>
</dbReference>
<dbReference type="SFLD" id="SFLDS00113">
    <property type="entry name" value="Radical_SAM_Phosphomethylpyrim"/>
    <property type="match status" value="1"/>
</dbReference>
<feature type="chain" id="PRO_1000004782" description="Phosphomethylpyrimidine synthase">
    <location>
        <begin position="1"/>
        <end position="632"/>
    </location>
</feature>
<feature type="binding site" evidence="1">
    <location>
        <position position="237"/>
    </location>
    <ligand>
        <name>substrate</name>
    </ligand>
</feature>
<feature type="binding site" evidence="1">
    <location>
        <position position="266"/>
    </location>
    <ligand>
        <name>substrate</name>
    </ligand>
</feature>
<feature type="binding site" evidence="1">
    <location>
        <position position="295"/>
    </location>
    <ligand>
        <name>substrate</name>
    </ligand>
</feature>
<feature type="binding site" evidence="1">
    <location>
        <position position="331"/>
    </location>
    <ligand>
        <name>substrate</name>
    </ligand>
</feature>
<feature type="binding site" evidence="1">
    <location>
        <begin position="351"/>
        <end position="353"/>
    </location>
    <ligand>
        <name>substrate</name>
    </ligand>
</feature>
<feature type="binding site" evidence="1">
    <location>
        <begin position="392"/>
        <end position="395"/>
    </location>
    <ligand>
        <name>substrate</name>
    </ligand>
</feature>
<feature type="binding site" evidence="1">
    <location>
        <position position="431"/>
    </location>
    <ligand>
        <name>substrate</name>
    </ligand>
</feature>
<feature type="binding site" evidence="1">
    <location>
        <position position="435"/>
    </location>
    <ligand>
        <name>Zn(2+)</name>
        <dbReference type="ChEBI" id="CHEBI:29105"/>
    </ligand>
</feature>
<feature type="binding site" evidence="1">
    <location>
        <position position="458"/>
    </location>
    <ligand>
        <name>substrate</name>
    </ligand>
</feature>
<feature type="binding site" evidence="1">
    <location>
        <position position="499"/>
    </location>
    <ligand>
        <name>Zn(2+)</name>
        <dbReference type="ChEBI" id="CHEBI:29105"/>
    </ligand>
</feature>
<feature type="binding site" evidence="1">
    <location>
        <position position="579"/>
    </location>
    <ligand>
        <name>[4Fe-4S] cluster</name>
        <dbReference type="ChEBI" id="CHEBI:49883"/>
        <note>4Fe-4S-S-AdoMet</note>
    </ligand>
</feature>
<feature type="binding site" evidence="1">
    <location>
        <position position="582"/>
    </location>
    <ligand>
        <name>[4Fe-4S] cluster</name>
        <dbReference type="ChEBI" id="CHEBI:49883"/>
        <note>4Fe-4S-S-AdoMet</note>
    </ligand>
</feature>
<feature type="binding site" evidence="1">
    <location>
        <position position="587"/>
    </location>
    <ligand>
        <name>[4Fe-4S] cluster</name>
        <dbReference type="ChEBI" id="CHEBI:49883"/>
        <note>4Fe-4S-S-AdoMet</note>
    </ligand>
</feature>
<accession>Q0AJI9</accession>
<reference key="1">
    <citation type="journal article" date="2007" name="Environ. Microbiol.">
        <title>Whole-genome analysis of the ammonia-oxidizing bacterium, Nitrosomonas eutropha C91: implications for niche adaptation.</title>
        <authorList>
            <person name="Stein L.Y."/>
            <person name="Arp D.J."/>
            <person name="Berube P.M."/>
            <person name="Chain P.S."/>
            <person name="Hauser L."/>
            <person name="Jetten M.S."/>
            <person name="Klotz M.G."/>
            <person name="Larimer F.W."/>
            <person name="Norton J.M."/>
            <person name="Op den Camp H.J.M."/>
            <person name="Shin M."/>
            <person name="Wei X."/>
        </authorList>
    </citation>
    <scope>NUCLEOTIDE SEQUENCE [LARGE SCALE GENOMIC DNA]</scope>
    <source>
        <strain>DSM 101675 / C91 / Nm57</strain>
    </source>
</reference>
<gene>
    <name evidence="1" type="primary">thiC</name>
    <name type="ordered locus">Neut_0196</name>
</gene>
<name>THIC_NITEC</name>
<organism>
    <name type="scientific">Nitrosomonas eutropha (strain DSM 101675 / C91 / Nm57)</name>
    <dbReference type="NCBI Taxonomy" id="335283"/>
    <lineage>
        <taxon>Bacteria</taxon>
        <taxon>Pseudomonadati</taxon>
        <taxon>Pseudomonadota</taxon>
        <taxon>Betaproteobacteria</taxon>
        <taxon>Nitrosomonadales</taxon>
        <taxon>Nitrosomonadaceae</taxon>
        <taxon>Nitrosomonas</taxon>
    </lineage>
</organism>
<comment type="function">
    <text evidence="1">Catalyzes the synthesis of the hydroxymethylpyrimidine phosphate (HMP-P) moiety of thiamine from aminoimidazole ribotide (AIR) in a radical S-adenosyl-L-methionine (SAM)-dependent reaction.</text>
</comment>
<comment type="catalytic activity">
    <reaction evidence="1">
        <text>5-amino-1-(5-phospho-beta-D-ribosyl)imidazole + S-adenosyl-L-methionine = 4-amino-2-methyl-5-(phosphooxymethyl)pyrimidine + CO + 5'-deoxyadenosine + formate + L-methionine + 3 H(+)</text>
        <dbReference type="Rhea" id="RHEA:24840"/>
        <dbReference type="ChEBI" id="CHEBI:15378"/>
        <dbReference type="ChEBI" id="CHEBI:15740"/>
        <dbReference type="ChEBI" id="CHEBI:17245"/>
        <dbReference type="ChEBI" id="CHEBI:17319"/>
        <dbReference type="ChEBI" id="CHEBI:57844"/>
        <dbReference type="ChEBI" id="CHEBI:58354"/>
        <dbReference type="ChEBI" id="CHEBI:59789"/>
        <dbReference type="ChEBI" id="CHEBI:137981"/>
        <dbReference type="EC" id="4.1.99.17"/>
    </reaction>
</comment>
<comment type="cofactor">
    <cofactor evidence="1">
        <name>[4Fe-4S] cluster</name>
        <dbReference type="ChEBI" id="CHEBI:49883"/>
    </cofactor>
    <text evidence="1">Binds 1 [4Fe-4S] cluster per subunit. The cluster is coordinated with 3 cysteines and an exchangeable S-adenosyl-L-methionine.</text>
</comment>
<comment type="pathway">
    <text evidence="1">Cofactor biosynthesis; thiamine diphosphate biosynthesis.</text>
</comment>
<comment type="subunit">
    <text evidence="1">Homodimer.</text>
</comment>
<comment type="similarity">
    <text evidence="1">Belongs to the ThiC family.</text>
</comment>
<keyword id="KW-0004">4Fe-4S</keyword>
<keyword id="KW-0408">Iron</keyword>
<keyword id="KW-0411">Iron-sulfur</keyword>
<keyword id="KW-0456">Lyase</keyword>
<keyword id="KW-0479">Metal-binding</keyword>
<keyword id="KW-0949">S-adenosyl-L-methionine</keyword>
<keyword id="KW-0784">Thiamine biosynthesis</keyword>
<keyword id="KW-0862">Zinc</keyword>